<sequence>MAGQVVQYGRHRKRRNYARISEVLELPNLIEIQTKSYDWFLKEGLLEMFRDISPIEDFTGNLSLEFVDYRLGEPKYDLEESKNRDATYAAPLRVKVRLIIKETGEVKEQEVFMGDFPLMTDTGTFVINGAERVIVSQLVRSPSVYFNEKIDKNGRENYDATIIPNRGAWLEYETDAKDVVYVRIDRTRKLPLTVLLRALGFSTDQEIVDLLGDSEYLRNTLEKDGTENTEQALLEIYERLRPGEPPTVENAKSLLYSRFFDPKRYDLASVGRYKANKKLHLKHRLFNQKLAEPIVNSETGEIVVDEGTVLDRRKLDEIMDVLETNANSEVFELEGSVIDEPVEIQSIKVYVPNDEEGRTTTVIGNALPDSEVKCITPADIVASMSYFFNLLNGIGYTDDIDHLGNRRLRSVGELLQNQFRIGLSRMERVVRERMSIQDTDSITPQQLINIRPVIASIKEFFGSSQLSQFMDQANPLAELTHKRRLSALGPGGLTRERAQMEVRDVHYSHYGRMCPIETPEGPNIGLINSLSSYARVNEFGFIETPYRKVDLDTNSITDQIDYLTADEEDSYVVAQANSRLDENGRFLDDEVVCRFRGNNTVMAKEKMDYMDVSPKQVVSAATACIPFLENDDSNRALMGANMQRQAVPLMNPEAPFVGTGMEHVAARDSGAAITAKHRGRVEHVESNEILVRRLVEENGTEHEGELDRYPLAKFKRSNSGTCYNQRPIVSIGDVVEYNEILADGPSMELGEMALGRNVVVGFMTWDGYNYEDAVIMSERLVKDDVYTSIHIEEYESEARDTKLGPEEITRDIPNVSESALKNLDDRGIVYVGAEVKDGDILVGKVTPKGVTELTAEERLLHAIFGEKAREVRDTSLRVPHGAGGIVLDVKVFNREEGDDTLSPGVNQLVRVYIVQKRKIHVGDKMCGRHGNKGVISKIVPEEDMPYLPDGRPIDIMLNPLGVPSRMNIGQVLELHLGMAAKNLGIHVASPVFDGANDDDVWSTIEEAGMARDGKTVLYDGRTGEPFDNRISVGVMYMLKLAHMVDDKLHARSTGPYSLVTQQPLGGKAQFGGQRFGEMEVWALEAYGAAYTLQEILTYKSDDTVGRVKTYESIVKGENISRPSVPESFRVLMKELQSLGLDVKVMDEHDNEIEMADVDDEDAAERKVDLQQKSAPESQKETTD</sequence>
<dbReference type="EC" id="2.7.7.6" evidence="1"/>
<dbReference type="EMBL" id="AE015929">
    <property type="protein sequence ID" value="AAO03903.1"/>
    <property type="molecule type" value="Genomic_DNA"/>
</dbReference>
<dbReference type="RefSeq" id="NP_763861.1">
    <property type="nucleotide sequence ID" value="NC_004461.1"/>
</dbReference>
<dbReference type="RefSeq" id="WP_001833083.1">
    <property type="nucleotide sequence ID" value="NZ_WBME01000014.1"/>
</dbReference>
<dbReference type="SMR" id="Q8CQ84"/>
<dbReference type="GeneID" id="50019529"/>
<dbReference type="KEGG" id="sep:SE_0306"/>
<dbReference type="PATRIC" id="fig|176280.10.peg.281"/>
<dbReference type="eggNOG" id="COG0085">
    <property type="taxonomic scope" value="Bacteria"/>
</dbReference>
<dbReference type="HOGENOM" id="CLU_000524_4_1_9"/>
<dbReference type="OrthoDB" id="9803954at2"/>
<dbReference type="Proteomes" id="UP000001411">
    <property type="component" value="Chromosome"/>
</dbReference>
<dbReference type="GO" id="GO:0000428">
    <property type="term" value="C:DNA-directed RNA polymerase complex"/>
    <property type="evidence" value="ECO:0007669"/>
    <property type="project" value="UniProtKB-KW"/>
</dbReference>
<dbReference type="GO" id="GO:0003677">
    <property type="term" value="F:DNA binding"/>
    <property type="evidence" value="ECO:0007669"/>
    <property type="project" value="UniProtKB-UniRule"/>
</dbReference>
<dbReference type="GO" id="GO:0003899">
    <property type="term" value="F:DNA-directed RNA polymerase activity"/>
    <property type="evidence" value="ECO:0007669"/>
    <property type="project" value="UniProtKB-UniRule"/>
</dbReference>
<dbReference type="GO" id="GO:0032549">
    <property type="term" value="F:ribonucleoside binding"/>
    <property type="evidence" value="ECO:0007669"/>
    <property type="project" value="InterPro"/>
</dbReference>
<dbReference type="GO" id="GO:0006351">
    <property type="term" value="P:DNA-templated transcription"/>
    <property type="evidence" value="ECO:0007669"/>
    <property type="project" value="UniProtKB-UniRule"/>
</dbReference>
<dbReference type="CDD" id="cd00653">
    <property type="entry name" value="RNA_pol_B_RPB2"/>
    <property type="match status" value="1"/>
</dbReference>
<dbReference type="FunFam" id="3.90.1800.10:FF:000001">
    <property type="entry name" value="DNA-directed RNA polymerase subunit beta"/>
    <property type="match status" value="1"/>
</dbReference>
<dbReference type="Gene3D" id="2.40.50.100">
    <property type="match status" value="1"/>
</dbReference>
<dbReference type="Gene3D" id="2.40.50.150">
    <property type="match status" value="1"/>
</dbReference>
<dbReference type="Gene3D" id="3.90.1100.10">
    <property type="match status" value="3"/>
</dbReference>
<dbReference type="Gene3D" id="2.40.270.10">
    <property type="entry name" value="DNA-directed RNA polymerase, subunit 2, domain 6"/>
    <property type="match status" value="1"/>
</dbReference>
<dbReference type="Gene3D" id="3.90.1800.10">
    <property type="entry name" value="RNA polymerase alpha subunit dimerisation domain"/>
    <property type="match status" value="1"/>
</dbReference>
<dbReference type="Gene3D" id="3.90.1110.10">
    <property type="entry name" value="RNA polymerase Rpb2, domain 2"/>
    <property type="match status" value="1"/>
</dbReference>
<dbReference type="HAMAP" id="MF_01321">
    <property type="entry name" value="RNApol_bact_RpoB"/>
    <property type="match status" value="1"/>
</dbReference>
<dbReference type="InterPro" id="IPR019462">
    <property type="entry name" value="DNA-dir_RNA_pol_bsu_external_1"/>
</dbReference>
<dbReference type="InterPro" id="IPR015712">
    <property type="entry name" value="DNA-dir_RNA_pol_su2"/>
</dbReference>
<dbReference type="InterPro" id="IPR007120">
    <property type="entry name" value="DNA-dir_RNAP_su2_dom"/>
</dbReference>
<dbReference type="InterPro" id="IPR037033">
    <property type="entry name" value="DNA-dir_RNAP_su2_hyb_sf"/>
</dbReference>
<dbReference type="InterPro" id="IPR010243">
    <property type="entry name" value="RNA_pol_bsu_bac"/>
</dbReference>
<dbReference type="InterPro" id="IPR007121">
    <property type="entry name" value="RNA_pol_bsu_CS"/>
</dbReference>
<dbReference type="InterPro" id="IPR007644">
    <property type="entry name" value="RNA_pol_bsu_protrusion"/>
</dbReference>
<dbReference type="InterPro" id="IPR007642">
    <property type="entry name" value="RNA_pol_Rpb2_2"/>
</dbReference>
<dbReference type="InterPro" id="IPR037034">
    <property type="entry name" value="RNA_pol_Rpb2_2_sf"/>
</dbReference>
<dbReference type="InterPro" id="IPR007645">
    <property type="entry name" value="RNA_pol_Rpb2_3"/>
</dbReference>
<dbReference type="InterPro" id="IPR007641">
    <property type="entry name" value="RNA_pol_Rpb2_7"/>
</dbReference>
<dbReference type="InterPro" id="IPR014724">
    <property type="entry name" value="RNA_pol_RPB2_OB-fold"/>
</dbReference>
<dbReference type="NCBIfam" id="NF001616">
    <property type="entry name" value="PRK00405.1"/>
    <property type="match status" value="1"/>
</dbReference>
<dbReference type="NCBIfam" id="TIGR02013">
    <property type="entry name" value="rpoB"/>
    <property type="match status" value="1"/>
</dbReference>
<dbReference type="PANTHER" id="PTHR20856">
    <property type="entry name" value="DNA-DIRECTED RNA POLYMERASE I SUBUNIT 2"/>
    <property type="match status" value="1"/>
</dbReference>
<dbReference type="Pfam" id="PF04563">
    <property type="entry name" value="RNA_pol_Rpb2_1"/>
    <property type="match status" value="1"/>
</dbReference>
<dbReference type="Pfam" id="PF04561">
    <property type="entry name" value="RNA_pol_Rpb2_2"/>
    <property type="match status" value="2"/>
</dbReference>
<dbReference type="Pfam" id="PF04565">
    <property type="entry name" value="RNA_pol_Rpb2_3"/>
    <property type="match status" value="1"/>
</dbReference>
<dbReference type="Pfam" id="PF10385">
    <property type="entry name" value="RNA_pol_Rpb2_45"/>
    <property type="match status" value="1"/>
</dbReference>
<dbReference type="Pfam" id="PF00562">
    <property type="entry name" value="RNA_pol_Rpb2_6"/>
    <property type="match status" value="1"/>
</dbReference>
<dbReference type="Pfam" id="PF04560">
    <property type="entry name" value="RNA_pol_Rpb2_7"/>
    <property type="match status" value="1"/>
</dbReference>
<dbReference type="SUPFAM" id="SSF64484">
    <property type="entry name" value="beta and beta-prime subunits of DNA dependent RNA-polymerase"/>
    <property type="match status" value="1"/>
</dbReference>
<dbReference type="PROSITE" id="PS01166">
    <property type="entry name" value="RNA_POL_BETA"/>
    <property type="match status" value="1"/>
</dbReference>
<reference key="1">
    <citation type="journal article" date="2003" name="Mol. Microbiol.">
        <title>Genome-based analysis of virulence genes in a non-biofilm-forming Staphylococcus epidermidis strain (ATCC 12228).</title>
        <authorList>
            <person name="Zhang Y.-Q."/>
            <person name="Ren S.-X."/>
            <person name="Li H.-L."/>
            <person name="Wang Y.-X."/>
            <person name="Fu G."/>
            <person name="Yang J."/>
            <person name="Qin Z.-Q."/>
            <person name="Miao Y.-G."/>
            <person name="Wang W.-Y."/>
            <person name="Chen R.-S."/>
            <person name="Shen Y."/>
            <person name="Chen Z."/>
            <person name="Yuan Z.-H."/>
            <person name="Zhao G.-P."/>
            <person name="Qu D."/>
            <person name="Danchin A."/>
            <person name="Wen Y.-M."/>
        </authorList>
    </citation>
    <scope>NUCLEOTIDE SEQUENCE [LARGE SCALE GENOMIC DNA]</scope>
    <source>
        <strain>ATCC 12228 / FDA PCI 1200</strain>
    </source>
</reference>
<feature type="chain" id="PRO_0000047965" description="DNA-directed RNA polymerase subunit beta">
    <location>
        <begin position="1"/>
        <end position="1183"/>
    </location>
</feature>
<feature type="region of interest" description="Disordered" evidence="2">
    <location>
        <begin position="1151"/>
        <end position="1183"/>
    </location>
</feature>
<feature type="compositionally biased region" description="Acidic residues" evidence="2">
    <location>
        <begin position="1151"/>
        <end position="1162"/>
    </location>
</feature>
<evidence type="ECO:0000255" key="1">
    <source>
        <dbReference type="HAMAP-Rule" id="MF_01321"/>
    </source>
</evidence>
<evidence type="ECO:0000256" key="2">
    <source>
        <dbReference type="SAM" id="MobiDB-lite"/>
    </source>
</evidence>
<comment type="function">
    <text evidence="1">DNA-dependent RNA polymerase catalyzes the transcription of DNA into RNA using the four ribonucleoside triphosphates as substrates.</text>
</comment>
<comment type="catalytic activity">
    <reaction evidence="1">
        <text>RNA(n) + a ribonucleoside 5'-triphosphate = RNA(n+1) + diphosphate</text>
        <dbReference type="Rhea" id="RHEA:21248"/>
        <dbReference type="Rhea" id="RHEA-COMP:14527"/>
        <dbReference type="Rhea" id="RHEA-COMP:17342"/>
        <dbReference type="ChEBI" id="CHEBI:33019"/>
        <dbReference type="ChEBI" id="CHEBI:61557"/>
        <dbReference type="ChEBI" id="CHEBI:140395"/>
        <dbReference type="EC" id="2.7.7.6"/>
    </reaction>
</comment>
<comment type="subunit">
    <text evidence="1">The RNAP catalytic core consists of 2 alpha, 1 beta, 1 beta' and 1 omega subunit. When a sigma factor is associated with the core the holoenzyme is formed, which can initiate transcription.</text>
</comment>
<comment type="similarity">
    <text evidence="1">Belongs to the RNA polymerase beta chain family.</text>
</comment>
<organism>
    <name type="scientific">Staphylococcus epidermidis (strain ATCC 12228 / FDA PCI 1200)</name>
    <dbReference type="NCBI Taxonomy" id="176280"/>
    <lineage>
        <taxon>Bacteria</taxon>
        <taxon>Bacillati</taxon>
        <taxon>Bacillota</taxon>
        <taxon>Bacilli</taxon>
        <taxon>Bacillales</taxon>
        <taxon>Staphylococcaceae</taxon>
        <taxon>Staphylococcus</taxon>
    </lineage>
</organism>
<keyword id="KW-0240">DNA-directed RNA polymerase</keyword>
<keyword id="KW-0548">Nucleotidyltransferase</keyword>
<keyword id="KW-0804">Transcription</keyword>
<keyword id="KW-0808">Transferase</keyword>
<proteinExistence type="inferred from homology"/>
<accession>Q8CQ84</accession>
<gene>
    <name evidence="1" type="primary">rpoB</name>
    <name type="ordered locus">SE_0306</name>
</gene>
<protein>
    <recommendedName>
        <fullName evidence="1">DNA-directed RNA polymerase subunit beta</fullName>
        <shortName evidence="1">RNAP subunit beta</shortName>
        <ecNumber evidence="1">2.7.7.6</ecNumber>
    </recommendedName>
    <alternativeName>
        <fullName evidence="1">RNA polymerase subunit beta</fullName>
    </alternativeName>
    <alternativeName>
        <fullName evidence="1">Transcriptase subunit beta</fullName>
    </alternativeName>
</protein>
<name>RPOB_STAES</name>